<gene>
    <name type="primary">UL26</name>
</gene>
<reference key="1">
    <citation type="journal article" date="1991" name="J. Gen. Virol.">
        <title>Comparative sequence analysis of the long repeat regions and adjoining parts of the long unique regions in the genomes of herpes simplex viruses types 1 and 2.</title>
        <authorList>
            <person name="McGeoch D.J."/>
            <person name="Cunningham C."/>
            <person name="McIntyre G."/>
            <person name="Dolan A."/>
        </authorList>
    </citation>
    <scope>NUCLEOTIDE SEQUENCE [LARGE SCALE GENOMIC DNA]</scope>
</reference>
<feature type="chain" id="PRO_0000406172" description="Capsid scaffolding protein">
    <location>
        <begin position="1"/>
        <end position="637"/>
    </location>
</feature>
<feature type="chain" id="PRO_0000406173" description="Assemblin" evidence="2">
    <location>
        <begin position="1"/>
        <end position="247"/>
    </location>
</feature>
<feature type="chain" id="PRO_0000406174" description="Assembly protein" evidence="2">
    <location>
        <begin position="248"/>
        <end position="637"/>
    </location>
</feature>
<feature type="region of interest" description="Disordered" evidence="3">
    <location>
        <begin position="262"/>
        <end position="326"/>
    </location>
</feature>
<feature type="region of interest" description="Interaction with pAP" evidence="2">
    <location>
        <begin position="326"/>
        <end position="345"/>
    </location>
</feature>
<feature type="region of interest" description="Disordered" evidence="3">
    <location>
        <begin position="414"/>
        <end position="479"/>
    </location>
</feature>
<feature type="region of interest" description="Disordered" evidence="3">
    <location>
        <begin position="502"/>
        <end position="608"/>
    </location>
</feature>
<feature type="region of interest" description="Interaction with major capsid protein" evidence="2">
    <location>
        <begin position="617"/>
        <end position="637"/>
    </location>
</feature>
<feature type="short sequence motif" description="Nuclear localization signal" evidence="1">
    <location>
        <begin position="428"/>
        <end position="431"/>
    </location>
</feature>
<feature type="compositionally biased region" description="Low complexity" evidence="3">
    <location>
        <begin position="277"/>
        <end position="317"/>
    </location>
</feature>
<feature type="compositionally biased region" description="Basic and acidic residues" evidence="3">
    <location>
        <begin position="432"/>
        <end position="450"/>
    </location>
</feature>
<feature type="compositionally biased region" description="Basic and acidic residues" evidence="3">
    <location>
        <begin position="457"/>
        <end position="468"/>
    </location>
</feature>
<feature type="compositionally biased region" description="Pro residues" evidence="3">
    <location>
        <begin position="537"/>
        <end position="559"/>
    </location>
</feature>
<feature type="compositionally biased region" description="Pro residues" evidence="3">
    <location>
        <begin position="566"/>
        <end position="594"/>
    </location>
</feature>
<feature type="compositionally biased region" description="Low complexity" evidence="3">
    <location>
        <begin position="595"/>
        <end position="608"/>
    </location>
</feature>
<feature type="active site" description="Charge relay system" evidence="2">
    <location>
        <position position="61"/>
    </location>
</feature>
<feature type="active site" description="Charge relay system" evidence="2">
    <location>
        <position position="129"/>
    </location>
</feature>
<feature type="active site" description="Charge relay system" evidence="2">
    <location>
        <position position="148"/>
    </location>
</feature>
<feature type="site" description="Cleavage; by assemblin; Release site" evidence="2">
    <location>
        <begin position="247"/>
        <end position="248"/>
    </location>
</feature>
<feature type="site" description="Cleavage; by assemblin; Maturation site" evidence="2">
    <location>
        <begin position="612"/>
        <end position="613"/>
    </location>
</feature>
<feature type="splice variant" id="VSP_040777" description="In isoform pAP." evidence="4">
    <location>
        <begin position="1"/>
        <end position="308"/>
    </location>
</feature>
<name>SCAF_HHV2H</name>
<protein>
    <recommendedName>
        <fullName evidence="2">Capsid scaffolding protein</fullName>
    </recommendedName>
    <alternativeName>
        <fullName>Capsid protein P40</fullName>
    </alternativeName>
    <alternativeName>
        <fullName evidence="2">Protease precursor</fullName>
        <shortName evidence="2">pPR</shortName>
    </alternativeName>
    <alternativeName>
        <fullName>Virion structural protein UL26</fullName>
    </alternativeName>
    <component>
        <recommendedName>
            <fullName evidence="2">Assemblin</fullName>
            <ecNumber evidence="2">3.4.21.97</ecNumber>
        </recommendedName>
        <alternativeName>
            <fullName>Capsid protein VP24</fullName>
        </alternativeName>
        <alternativeName>
            <fullName evidence="2">Protease</fullName>
            <shortName evidence="2">Pr</shortName>
        </alternativeName>
    </component>
    <component>
        <recommendedName>
            <fullName evidence="2">Assembly protein</fullName>
            <shortName evidence="2">AP</shortName>
        </recommendedName>
        <alternativeName>
            <fullName evidence="2">Capsid assembly protein</fullName>
        </alternativeName>
        <alternativeName>
            <fullName>Capsid protein VP22A</fullName>
        </alternativeName>
    </component>
</protein>
<comment type="function">
    <molecule>Capsid scaffolding protein</molecule>
    <text evidence="2">Acts as a scaffold protein by binding major capsid protein in the cytoplasm, inducing the nuclear localization of both proteins. Multimerizes in the nucleus such as major capsid protein forms the icosahedral T=16 capsid. Autocatalytic cleavage releases the assembly protein, and subsequently abolishes interaction with major capsid protein. Cleavages products are evicted from the capsid before or during DNA packaging.</text>
</comment>
<comment type="function">
    <molecule>Assemblin</molecule>
    <text evidence="2">Protease that plays an essential role in virion assembly within the nucleus. Catalyzes the cleavage of the assembly protein after formation of the spherical procapsid. By that cleavage, the capsid matures and gains its icosahedral shape. The cleavage sites seem to include -Ala-Ser-, -Ala-Ala-, as well as Ala-Thr bonds. Assemblin and cleavages products are evicted from the capsid before or during DNA packaging.</text>
</comment>
<comment type="function">
    <molecule>Assembly protein</molecule>
    <text evidence="2">Plays a major role in capsid assembly. Acts as a scaffold protein by binding major capsid protein. Multimerizes in the nucleus such as major capsid protein forms the icosahedral T=16 capsid. Cleaved by assemblin after capsid completion. The cleavages products are evicted from the capsid before or during DNA packaging.</text>
</comment>
<comment type="catalytic activity">
    <molecule>Assemblin</molecule>
    <reaction evidence="2">
        <text>Cleaves -Ala-|-Ser- and -Ala-|-Ala- bonds in the scaffold protein.</text>
        <dbReference type="EC" id="3.4.21.97"/>
    </reaction>
</comment>
<comment type="subunit">
    <molecule>Capsid scaffolding protein</molecule>
    <text evidence="2">Homomultimer. Interacts with major capsid protein.</text>
</comment>
<comment type="subunit">
    <molecule>Assemblin</molecule>
    <text evidence="2">Exists in a monomer-dimer equilibrium with the dimer being the active species.</text>
</comment>
<comment type="subunit">
    <molecule>Assembly protein</molecule>
    <text evidence="2">Homomultimer. Interacts with major capsid protein.</text>
</comment>
<comment type="subcellular location">
    <molecule>Capsid scaffolding protein</molecule>
    <subcellularLocation>
        <location evidence="2">Host cytoplasm</location>
    </subcellularLocation>
</comment>
<comment type="subcellular location">
    <molecule>Assemblin</molecule>
    <subcellularLocation>
        <location evidence="2">Host nucleus</location>
    </subcellularLocation>
</comment>
<comment type="subcellular location">
    <molecule>Assembly protein</molecule>
    <subcellularLocation>
        <location evidence="2">Host nucleus</location>
    </subcellularLocation>
</comment>
<comment type="alternative products">
    <event type="alternative promoter"/>
    <isoform>
        <id>P89449-1</id>
        <name>Capsid scaffolding protein</name>
        <name>pPR</name>
        <name>UL26</name>
        <sequence type="displayed"/>
    </isoform>
    <isoform>
        <id>P89449-2</id>
        <name>pAP</name>
        <name>Assembly protein</name>
        <name>UL26.5 protein</name>
        <sequence type="described" ref="VSP_040777"/>
    </isoform>
</comment>
<comment type="domain">
    <text evidence="2">Region of interaction between pPR and pAP is called Amino conserved domain (ACD). The region of interaction with major capsid protein is called carboxyl conserved domain (CCD).</text>
</comment>
<comment type="PTM">
    <molecule>Capsid scaffolding protein</molecule>
    <text evidence="2">Capsid scaffolding protein is cleaved by assemblin after formation of the spherical procapsid. As a result, the capsid obtains its mature, icosahedral shape. Cleavages occur at two or more sites: release (R-site) and maturation (M-site).</text>
</comment>
<comment type="similarity">
    <text evidence="2">Belongs to the herpesviridae capsid scaffolding protein family.</text>
</comment>
<organismHost>
    <name type="scientific">Homo sapiens</name>
    <name type="common">Human</name>
    <dbReference type="NCBI Taxonomy" id="9606"/>
</organismHost>
<organism>
    <name type="scientific">Human herpesvirus 2 (strain HG52)</name>
    <name type="common">HHV-2</name>
    <name type="synonym">Human herpes simplex virus 2</name>
    <dbReference type="NCBI Taxonomy" id="10315"/>
    <lineage>
        <taxon>Viruses</taxon>
        <taxon>Duplodnaviria</taxon>
        <taxon>Heunggongvirae</taxon>
        <taxon>Peploviricota</taxon>
        <taxon>Herviviricetes</taxon>
        <taxon>Herpesvirales</taxon>
        <taxon>Orthoherpesviridae</taxon>
        <taxon>Alphaherpesvirinae</taxon>
        <taxon>Simplexvirus</taxon>
        <taxon>Simplexvirus humanalpha2</taxon>
        <taxon>Human herpesvirus 2</taxon>
    </lineage>
</organism>
<dbReference type="EC" id="3.4.21.97" evidence="2"/>
<dbReference type="EMBL" id="Z86099">
    <property type="protein sequence ID" value="CAB06750.1"/>
    <property type="molecule type" value="Genomic_DNA"/>
</dbReference>
<dbReference type="EMBL" id="Z86099">
    <property type="protein sequence ID" value="CAB06751.1"/>
    <property type="status" value="ALT_SEQ"/>
    <property type="molecule type" value="Genomic_DNA"/>
</dbReference>
<dbReference type="RefSeq" id="YP_009137177.1">
    <property type="nucleotide sequence ID" value="NC_001798.2"/>
</dbReference>
<dbReference type="SMR" id="P89449"/>
<dbReference type="BindingDB" id="P89449"/>
<dbReference type="ChEMBL" id="CHEMBL3416"/>
<dbReference type="MEROPS" id="S21.001"/>
<dbReference type="DNASU" id="1487310"/>
<dbReference type="GeneID" id="1487310"/>
<dbReference type="KEGG" id="vg:1487310"/>
<dbReference type="KEGG" id="vg:1487311"/>
<dbReference type="Proteomes" id="UP000001874">
    <property type="component" value="Segment"/>
</dbReference>
<dbReference type="GO" id="GO:0030430">
    <property type="term" value="C:host cell cytoplasm"/>
    <property type="evidence" value="ECO:0007669"/>
    <property type="project" value="UniProtKB-SubCell"/>
</dbReference>
<dbReference type="GO" id="GO:0042025">
    <property type="term" value="C:host cell nucleus"/>
    <property type="evidence" value="ECO:0007669"/>
    <property type="project" value="UniProtKB-SubCell"/>
</dbReference>
<dbReference type="GO" id="GO:0042802">
    <property type="term" value="F:identical protein binding"/>
    <property type="evidence" value="ECO:0007669"/>
    <property type="project" value="UniProtKB-UniRule"/>
</dbReference>
<dbReference type="GO" id="GO:0004252">
    <property type="term" value="F:serine-type endopeptidase activity"/>
    <property type="evidence" value="ECO:0007669"/>
    <property type="project" value="UniProtKB-UniRule"/>
</dbReference>
<dbReference type="GO" id="GO:0039708">
    <property type="term" value="P:nuclear capsid assembly"/>
    <property type="evidence" value="ECO:0007669"/>
    <property type="project" value="UniProtKB-ARBA"/>
</dbReference>
<dbReference type="GO" id="GO:0006508">
    <property type="term" value="P:proteolysis"/>
    <property type="evidence" value="ECO:0007669"/>
    <property type="project" value="UniProtKB-KW"/>
</dbReference>
<dbReference type="GO" id="GO:0019076">
    <property type="term" value="P:viral release from host cell"/>
    <property type="evidence" value="ECO:0007669"/>
    <property type="project" value="UniProtKB-UniRule"/>
</dbReference>
<dbReference type="FunFam" id="3.20.16.10:FF:000001">
    <property type="entry name" value="Capsid scaffolding protein"/>
    <property type="match status" value="1"/>
</dbReference>
<dbReference type="Gene3D" id="3.20.16.10">
    <property type="entry name" value="Herpesvirus/Caudovirus protease domain"/>
    <property type="match status" value="1"/>
</dbReference>
<dbReference type="HAMAP" id="MF_04008">
    <property type="entry name" value="HSV_SCAF"/>
    <property type="match status" value="1"/>
</dbReference>
<dbReference type="InterPro" id="IPR035443">
    <property type="entry name" value="Herpes_virus_sf"/>
</dbReference>
<dbReference type="InterPro" id="IPR001847">
    <property type="entry name" value="Peptidase_S21"/>
</dbReference>
<dbReference type="Pfam" id="PF00716">
    <property type="entry name" value="Peptidase_S21"/>
    <property type="match status" value="1"/>
</dbReference>
<dbReference type="PRINTS" id="PR00236">
    <property type="entry name" value="HSVCAPSIDP40"/>
</dbReference>
<dbReference type="SUPFAM" id="SSF50789">
    <property type="entry name" value="Herpes virus serine proteinase, assemblin"/>
    <property type="match status" value="1"/>
</dbReference>
<accession>P89449</accession>
<accession>P90341</accession>
<proteinExistence type="inferred from homology"/>
<keyword id="KW-0877">Alternative promoter usage</keyword>
<keyword id="KW-1035">Host cytoplasm</keyword>
<keyword id="KW-1048">Host nucleus</keyword>
<keyword id="KW-0378">Hydrolase</keyword>
<keyword id="KW-0597">Phosphoprotein</keyword>
<keyword id="KW-0645">Protease</keyword>
<keyword id="KW-1185">Reference proteome</keyword>
<keyword id="KW-0720">Serine protease</keyword>
<keyword id="KW-0118">Viral capsid assembly</keyword>
<keyword id="KW-1188">Viral release from host cell</keyword>
<sequence length="637" mass="66941">MASAEMRERLEAPLPDRAVPIYVAGFLALYDSGDPGELALDPDTVRAALPPENPLPINVDHRARCEVGRVLAVVNDPRGPFFVGLIACVQLERVLETAASAAIFERRGPALSREERLLYLITNYLPSVSLSTKRRGDEVPPDRTLFAHVALCAIGRRLGTIVTYDTSLDAAIAPFRHLDPATREGVRREAAEAELALAGRTWAPGVEALTHTLLSTAVNNMMLRDRWSLVAERRRQAGIAGHTYLQASEKFKIWGAESAPAPERGYKTGAPGAMDTSPAASVPAPQVAVRARQVASSSSSSSFPAPADMNPVSASGAPAPPPPGDGSYLWIPASHYNQLVTGQSAPRHPPLTACGLPAAGTVAYGHPGAGPSPHYPPPPAHPYPGMLFAGPSPLEAQIAALVGAIAADRQAGGLPAAAGDHGIRGSAKRRRHEVEQPEYDCGRDEPDRDFPYYPGEARPEPRPVDSRRAARQASGPHETITALVGAVTSLQQELAHMRARTHAPYGPYPPVGPYHHPHADTETPAQPPRYPAKAVYLPPPHIAPPGPPLSGAVPPPSYPPVAVTPGPAPPLHQPSPAHAHPPPPPPGPTPPPAASLPQPEAPGAEAGALVNASSAAHVNVDTARAADLFVSQMMGSR</sequence>
<evidence type="ECO:0000250" key="1"/>
<evidence type="ECO:0000255" key="2">
    <source>
        <dbReference type="HAMAP-Rule" id="MF_04008"/>
    </source>
</evidence>
<evidence type="ECO:0000256" key="3">
    <source>
        <dbReference type="SAM" id="MobiDB-lite"/>
    </source>
</evidence>
<evidence type="ECO:0000305" key="4"/>